<gene>
    <name evidence="1" type="primary">ulaE</name>
    <name type="ordered locus">SF4352</name>
    <name type="ordered locus">S4622</name>
</gene>
<dbReference type="EC" id="5.1.3.22" evidence="1"/>
<dbReference type="EMBL" id="AE005674">
    <property type="protein sequence ID" value="AAN45769.1"/>
    <property type="molecule type" value="Genomic_DNA"/>
</dbReference>
<dbReference type="EMBL" id="AE014073">
    <property type="protein sequence ID" value="AAP19551.1"/>
    <property type="molecule type" value="Genomic_DNA"/>
</dbReference>
<dbReference type="RefSeq" id="WP_000949545.1">
    <property type="nucleotide sequence ID" value="NZ_WPGW01000113.1"/>
</dbReference>
<dbReference type="SMR" id="Q83II8"/>
<dbReference type="STRING" id="198214.SF4352"/>
<dbReference type="PaxDb" id="198214-SF4352"/>
<dbReference type="KEGG" id="sfl:SF4352"/>
<dbReference type="KEGG" id="sfx:S4622"/>
<dbReference type="PATRIC" id="fig|198214.7.peg.5131"/>
<dbReference type="HOGENOM" id="CLU_082738_0_0_6"/>
<dbReference type="UniPathway" id="UPA00263">
    <property type="reaction ID" value="UER00379"/>
</dbReference>
<dbReference type="Proteomes" id="UP000001006">
    <property type="component" value="Chromosome"/>
</dbReference>
<dbReference type="Proteomes" id="UP000002673">
    <property type="component" value="Chromosome"/>
</dbReference>
<dbReference type="GO" id="GO:0016861">
    <property type="term" value="F:intramolecular oxidoreductase activity, interconverting aldoses and ketoses"/>
    <property type="evidence" value="ECO:0007669"/>
    <property type="project" value="InterPro"/>
</dbReference>
<dbReference type="GO" id="GO:0034015">
    <property type="term" value="F:L-ribulose-5-phosphate 3-epimerase activity"/>
    <property type="evidence" value="ECO:0007669"/>
    <property type="project" value="UniProtKB-UniRule"/>
</dbReference>
<dbReference type="GO" id="GO:0019854">
    <property type="term" value="P:L-ascorbic acid catabolic process"/>
    <property type="evidence" value="ECO:0007669"/>
    <property type="project" value="UniProtKB-UniRule"/>
</dbReference>
<dbReference type="FunFam" id="3.20.20.150:FF:000003">
    <property type="entry name" value="L-ribulose-5-phosphate 3-epimerase UlaE"/>
    <property type="match status" value="1"/>
</dbReference>
<dbReference type="Gene3D" id="3.20.20.150">
    <property type="entry name" value="Divalent-metal-dependent TIM barrel enzymes"/>
    <property type="match status" value="1"/>
</dbReference>
<dbReference type="HAMAP" id="MF_01951">
    <property type="entry name" value="UlaE"/>
    <property type="match status" value="1"/>
</dbReference>
<dbReference type="InterPro" id="IPR004560">
    <property type="entry name" value="L-Ru-5P_3-Epase"/>
</dbReference>
<dbReference type="InterPro" id="IPR023492">
    <property type="entry name" value="L-Ru-5P_3-Epase_Enterobacteria"/>
</dbReference>
<dbReference type="InterPro" id="IPR050417">
    <property type="entry name" value="Sugar_Epim/Isomerase"/>
</dbReference>
<dbReference type="InterPro" id="IPR036237">
    <property type="entry name" value="Xyl_isomerase-like_sf"/>
</dbReference>
<dbReference type="InterPro" id="IPR013022">
    <property type="entry name" value="Xyl_isomerase-like_TIM-brl"/>
</dbReference>
<dbReference type="NCBIfam" id="TIGR00542">
    <property type="entry name" value="hxl6Piso_put"/>
    <property type="match status" value="1"/>
</dbReference>
<dbReference type="NCBIfam" id="NF009688">
    <property type="entry name" value="PRK13209.1"/>
    <property type="match status" value="1"/>
</dbReference>
<dbReference type="NCBIfam" id="NF009689">
    <property type="entry name" value="PRK13210.1"/>
    <property type="match status" value="1"/>
</dbReference>
<dbReference type="PANTHER" id="PTHR43489">
    <property type="entry name" value="ISOMERASE"/>
    <property type="match status" value="1"/>
</dbReference>
<dbReference type="PANTHER" id="PTHR43489:SF8">
    <property type="entry name" value="L-RIBULOSE-5-PHOSPHATE 3-EPIMERASE ULAE"/>
    <property type="match status" value="1"/>
</dbReference>
<dbReference type="Pfam" id="PF01261">
    <property type="entry name" value="AP_endonuc_2"/>
    <property type="match status" value="1"/>
</dbReference>
<dbReference type="SUPFAM" id="SSF51658">
    <property type="entry name" value="Xylose isomerase-like"/>
    <property type="match status" value="1"/>
</dbReference>
<comment type="function">
    <text evidence="1">Catalyzes the isomerization of L-xylulose-5-phosphate to L-ribulose-5-phosphate. Is involved in the anaerobic L-ascorbate utilization.</text>
</comment>
<comment type="catalytic activity">
    <reaction evidence="1">
        <text>L-ribulose 5-phosphate = L-xylulose 5-phosphate</text>
        <dbReference type="Rhea" id="RHEA:18497"/>
        <dbReference type="ChEBI" id="CHEBI:57829"/>
        <dbReference type="ChEBI" id="CHEBI:58226"/>
        <dbReference type="EC" id="5.1.3.22"/>
    </reaction>
</comment>
<comment type="pathway">
    <text evidence="1">Cofactor degradation; L-ascorbate degradation; D-xylulose 5-phosphate from L-ascorbate: step 3/4.</text>
</comment>
<comment type="induction">
    <text evidence="1">Induced by L-ascorbate. Repressed by UlaR.</text>
</comment>
<comment type="similarity">
    <text evidence="1">Belongs to the L-ribulose-5-phosphate 3-epimerase family.</text>
</comment>
<proteinExistence type="inferred from homology"/>
<name>ULAE_SHIFL</name>
<organism>
    <name type="scientific">Shigella flexneri</name>
    <dbReference type="NCBI Taxonomy" id="623"/>
    <lineage>
        <taxon>Bacteria</taxon>
        <taxon>Pseudomonadati</taxon>
        <taxon>Pseudomonadota</taxon>
        <taxon>Gammaproteobacteria</taxon>
        <taxon>Enterobacterales</taxon>
        <taxon>Enterobacteriaceae</taxon>
        <taxon>Shigella</taxon>
    </lineage>
</organism>
<sequence>MLSKQIPLGIYEKALPAGECWLERLRLAKTLGFDFVEMSVDETNERLSRLDWSREQRLALVNAIVETGVRVPSMCLSAHRRFPLGSEDDAVRAQGLEIMRKAIQFAQDVGIRVIQLAGYDVYYQEANNETRRRFRDGLKESVEMASRAQVTLAMEIMDYPLMNSISKALGYAHYLNNPWFQLYPDIGNLSAWDNDVQMELQAGIGHIVAVHVKDTKPGVFKNVPFGEGVVDFERCFETLKQSGYCGPYLIEMWSETAEDPAAEVVKACDWVKARMAKAGMVEAA</sequence>
<accession>Q83II8</accession>
<accession>Q7BYI4</accession>
<feature type="chain" id="PRO_0000233259" description="L-ribulose-5-phosphate 3-epimerase UlaE">
    <location>
        <begin position="1"/>
        <end position="284"/>
    </location>
</feature>
<protein>
    <recommendedName>
        <fullName evidence="1">L-ribulose-5-phosphate 3-epimerase UlaE</fullName>
        <ecNumber evidence="1">5.1.3.22</ecNumber>
    </recommendedName>
    <alternativeName>
        <fullName evidence="1">L-ascorbate utilization protein E</fullName>
    </alternativeName>
    <alternativeName>
        <fullName evidence="1">L-xylulose-5-phosphate 3-epimerase</fullName>
    </alternativeName>
</protein>
<evidence type="ECO:0000255" key="1">
    <source>
        <dbReference type="HAMAP-Rule" id="MF_01951"/>
    </source>
</evidence>
<keyword id="KW-0413">Isomerase</keyword>
<keyword id="KW-1185">Reference proteome</keyword>
<reference key="1">
    <citation type="journal article" date="2002" name="Nucleic Acids Res.">
        <title>Genome sequence of Shigella flexneri 2a: insights into pathogenicity through comparison with genomes of Escherichia coli K12 and O157.</title>
        <authorList>
            <person name="Jin Q."/>
            <person name="Yuan Z."/>
            <person name="Xu J."/>
            <person name="Wang Y."/>
            <person name="Shen Y."/>
            <person name="Lu W."/>
            <person name="Wang J."/>
            <person name="Liu H."/>
            <person name="Yang J."/>
            <person name="Yang F."/>
            <person name="Zhang X."/>
            <person name="Zhang J."/>
            <person name="Yang G."/>
            <person name="Wu H."/>
            <person name="Qu D."/>
            <person name="Dong J."/>
            <person name="Sun L."/>
            <person name="Xue Y."/>
            <person name="Zhao A."/>
            <person name="Gao Y."/>
            <person name="Zhu J."/>
            <person name="Kan B."/>
            <person name="Ding K."/>
            <person name="Chen S."/>
            <person name="Cheng H."/>
            <person name="Yao Z."/>
            <person name="He B."/>
            <person name="Chen R."/>
            <person name="Ma D."/>
            <person name="Qiang B."/>
            <person name="Wen Y."/>
            <person name="Hou Y."/>
            <person name="Yu J."/>
        </authorList>
    </citation>
    <scope>NUCLEOTIDE SEQUENCE [LARGE SCALE GENOMIC DNA]</scope>
    <source>
        <strain>301 / Serotype 2a</strain>
    </source>
</reference>
<reference key="2">
    <citation type="journal article" date="2003" name="Infect. Immun.">
        <title>Complete genome sequence and comparative genomics of Shigella flexneri serotype 2a strain 2457T.</title>
        <authorList>
            <person name="Wei J."/>
            <person name="Goldberg M.B."/>
            <person name="Burland V."/>
            <person name="Venkatesan M.M."/>
            <person name="Deng W."/>
            <person name="Fournier G."/>
            <person name="Mayhew G.F."/>
            <person name="Plunkett G. III"/>
            <person name="Rose D.J."/>
            <person name="Darling A."/>
            <person name="Mau B."/>
            <person name="Perna N.T."/>
            <person name="Payne S.M."/>
            <person name="Runyen-Janecky L.J."/>
            <person name="Zhou S."/>
            <person name="Schwartz D.C."/>
            <person name="Blattner F.R."/>
        </authorList>
    </citation>
    <scope>NUCLEOTIDE SEQUENCE [LARGE SCALE GENOMIC DNA]</scope>
    <source>
        <strain>ATCC 700930 / 2457T / Serotype 2a</strain>
    </source>
</reference>